<gene>
    <name evidence="1" type="primary">gcvT</name>
    <name type="ordered locus">OB1904</name>
</gene>
<evidence type="ECO:0000255" key="1">
    <source>
        <dbReference type="HAMAP-Rule" id="MF_00259"/>
    </source>
</evidence>
<evidence type="ECO:0000305" key="2"/>
<proteinExistence type="inferred from homology"/>
<sequence length="371" mass="41336">MSEQKRTPIFTEYASHGAKTIDFGGWDLPVQFSSIKHEHEVTRTKAGLFDVSHMGEISVKGPKSESFLQYVLTNDISKLEPGKAQYTIMCYEDGGTVDDLIVYKLDDEDYLLVVNAANTEKDANWIKQKNTYSNDEIVIEDVSNQYVQLAIQGPKAVEILQKCTDENVQEIKFFRFKNNVALKGIEAKALISRTGYTGEDGFEIYIDASSGVALWKLLLEKGEANGLEPIGLGARDTLRFEANLALYGQELSKDISPIEAGLGFAVKVNKGPDFIGKEVLKNQVENGTDRKLVGIEMIDKGIPRHEYEVLKDNKEIGFITSGTQSPTLNKNVGLALINISYTEIGTEVDVKVRKRILKAKIVPTPFYKRGR</sequence>
<dbReference type="EC" id="2.1.2.10" evidence="1"/>
<dbReference type="EMBL" id="BA000028">
    <property type="protein sequence ID" value="BAC13860.1"/>
    <property type="status" value="ALT_INIT"/>
    <property type="molecule type" value="Genomic_DNA"/>
</dbReference>
<dbReference type="RefSeq" id="WP_173338115.1">
    <property type="nucleotide sequence ID" value="NC_004193.1"/>
</dbReference>
<dbReference type="SMR" id="Q8CXD9"/>
<dbReference type="STRING" id="221109.gene:10734144"/>
<dbReference type="KEGG" id="oih:OB1904"/>
<dbReference type="eggNOG" id="COG0404">
    <property type="taxonomic scope" value="Bacteria"/>
</dbReference>
<dbReference type="HOGENOM" id="CLU_007884_10_2_9"/>
<dbReference type="PhylomeDB" id="Q8CXD9"/>
<dbReference type="Proteomes" id="UP000000822">
    <property type="component" value="Chromosome"/>
</dbReference>
<dbReference type="GO" id="GO:0005829">
    <property type="term" value="C:cytosol"/>
    <property type="evidence" value="ECO:0007669"/>
    <property type="project" value="TreeGrafter"/>
</dbReference>
<dbReference type="GO" id="GO:0005960">
    <property type="term" value="C:glycine cleavage complex"/>
    <property type="evidence" value="ECO:0007669"/>
    <property type="project" value="InterPro"/>
</dbReference>
<dbReference type="GO" id="GO:0004047">
    <property type="term" value="F:aminomethyltransferase activity"/>
    <property type="evidence" value="ECO:0007669"/>
    <property type="project" value="UniProtKB-UniRule"/>
</dbReference>
<dbReference type="GO" id="GO:0008483">
    <property type="term" value="F:transaminase activity"/>
    <property type="evidence" value="ECO:0007669"/>
    <property type="project" value="UniProtKB-KW"/>
</dbReference>
<dbReference type="GO" id="GO:0019464">
    <property type="term" value="P:glycine decarboxylation via glycine cleavage system"/>
    <property type="evidence" value="ECO:0007669"/>
    <property type="project" value="UniProtKB-UniRule"/>
</dbReference>
<dbReference type="FunFam" id="2.40.30.110:FF:000003">
    <property type="entry name" value="Aminomethyltransferase"/>
    <property type="match status" value="1"/>
</dbReference>
<dbReference type="FunFam" id="3.30.70.1400:FF:000001">
    <property type="entry name" value="Aminomethyltransferase"/>
    <property type="match status" value="1"/>
</dbReference>
<dbReference type="FunFam" id="4.10.1250.10:FF:000001">
    <property type="entry name" value="Aminomethyltransferase"/>
    <property type="match status" value="1"/>
</dbReference>
<dbReference type="Gene3D" id="2.40.30.110">
    <property type="entry name" value="Aminomethyltransferase beta-barrel domains"/>
    <property type="match status" value="1"/>
</dbReference>
<dbReference type="Gene3D" id="3.30.70.1400">
    <property type="entry name" value="Aminomethyltransferase beta-barrel domains"/>
    <property type="match status" value="1"/>
</dbReference>
<dbReference type="Gene3D" id="4.10.1250.10">
    <property type="entry name" value="Aminomethyltransferase fragment"/>
    <property type="match status" value="1"/>
</dbReference>
<dbReference type="Gene3D" id="3.30.1360.120">
    <property type="entry name" value="Probable tRNA modification gtpase trme, domain 1"/>
    <property type="match status" value="1"/>
</dbReference>
<dbReference type="HAMAP" id="MF_00259">
    <property type="entry name" value="GcvT"/>
    <property type="match status" value="1"/>
</dbReference>
<dbReference type="InterPro" id="IPR006223">
    <property type="entry name" value="GCS_T"/>
</dbReference>
<dbReference type="InterPro" id="IPR022903">
    <property type="entry name" value="GCS_T_bac"/>
</dbReference>
<dbReference type="InterPro" id="IPR013977">
    <property type="entry name" value="GCST_C"/>
</dbReference>
<dbReference type="InterPro" id="IPR006222">
    <property type="entry name" value="GCV_T_N"/>
</dbReference>
<dbReference type="InterPro" id="IPR028896">
    <property type="entry name" value="GcvT/YgfZ/DmdA"/>
</dbReference>
<dbReference type="InterPro" id="IPR029043">
    <property type="entry name" value="GcvT/YgfZ_C"/>
</dbReference>
<dbReference type="InterPro" id="IPR027266">
    <property type="entry name" value="TrmE/GcvT_dom1"/>
</dbReference>
<dbReference type="NCBIfam" id="TIGR00528">
    <property type="entry name" value="gcvT"/>
    <property type="match status" value="1"/>
</dbReference>
<dbReference type="NCBIfam" id="NF001567">
    <property type="entry name" value="PRK00389.1"/>
    <property type="match status" value="1"/>
</dbReference>
<dbReference type="PANTHER" id="PTHR43757">
    <property type="entry name" value="AMINOMETHYLTRANSFERASE"/>
    <property type="match status" value="1"/>
</dbReference>
<dbReference type="PANTHER" id="PTHR43757:SF2">
    <property type="entry name" value="AMINOMETHYLTRANSFERASE, MITOCHONDRIAL"/>
    <property type="match status" value="1"/>
</dbReference>
<dbReference type="Pfam" id="PF01571">
    <property type="entry name" value="GCV_T"/>
    <property type="match status" value="1"/>
</dbReference>
<dbReference type="Pfam" id="PF08669">
    <property type="entry name" value="GCV_T_C"/>
    <property type="match status" value="1"/>
</dbReference>
<dbReference type="PIRSF" id="PIRSF006487">
    <property type="entry name" value="GcvT"/>
    <property type="match status" value="1"/>
</dbReference>
<dbReference type="SUPFAM" id="SSF101790">
    <property type="entry name" value="Aminomethyltransferase beta-barrel domain"/>
    <property type="match status" value="1"/>
</dbReference>
<dbReference type="SUPFAM" id="SSF103025">
    <property type="entry name" value="Folate-binding domain"/>
    <property type="match status" value="1"/>
</dbReference>
<keyword id="KW-0032">Aminotransferase</keyword>
<keyword id="KW-1185">Reference proteome</keyword>
<keyword id="KW-0808">Transferase</keyword>
<name>GCST_OCEIH</name>
<protein>
    <recommendedName>
        <fullName evidence="1">Aminomethyltransferase</fullName>
        <ecNumber evidence="1">2.1.2.10</ecNumber>
    </recommendedName>
    <alternativeName>
        <fullName evidence="1">Glycine cleavage system T protein</fullName>
    </alternativeName>
</protein>
<organism>
    <name type="scientific">Oceanobacillus iheyensis (strain DSM 14371 / CIP 107618 / JCM 11309 / KCTC 3954 / HTE831)</name>
    <dbReference type="NCBI Taxonomy" id="221109"/>
    <lineage>
        <taxon>Bacteria</taxon>
        <taxon>Bacillati</taxon>
        <taxon>Bacillota</taxon>
        <taxon>Bacilli</taxon>
        <taxon>Bacillales</taxon>
        <taxon>Bacillaceae</taxon>
        <taxon>Oceanobacillus</taxon>
    </lineage>
</organism>
<comment type="function">
    <text evidence="1">The glycine cleavage system catalyzes the degradation of glycine.</text>
</comment>
<comment type="catalytic activity">
    <reaction evidence="1">
        <text>N(6)-[(R)-S(8)-aminomethyldihydrolipoyl]-L-lysyl-[protein] + (6S)-5,6,7,8-tetrahydrofolate = N(6)-[(R)-dihydrolipoyl]-L-lysyl-[protein] + (6R)-5,10-methylene-5,6,7,8-tetrahydrofolate + NH4(+)</text>
        <dbReference type="Rhea" id="RHEA:16945"/>
        <dbReference type="Rhea" id="RHEA-COMP:10475"/>
        <dbReference type="Rhea" id="RHEA-COMP:10492"/>
        <dbReference type="ChEBI" id="CHEBI:15636"/>
        <dbReference type="ChEBI" id="CHEBI:28938"/>
        <dbReference type="ChEBI" id="CHEBI:57453"/>
        <dbReference type="ChEBI" id="CHEBI:83100"/>
        <dbReference type="ChEBI" id="CHEBI:83143"/>
        <dbReference type="EC" id="2.1.2.10"/>
    </reaction>
</comment>
<comment type="subunit">
    <text evidence="1">The glycine cleavage system is composed of four proteins: P, T, L and H.</text>
</comment>
<comment type="similarity">
    <text evidence="1">Belongs to the GcvT family.</text>
</comment>
<comment type="sequence caution" evidence="2">
    <conflict type="erroneous initiation">
        <sequence resource="EMBL-CDS" id="BAC13860"/>
    </conflict>
</comment>
<feature type="chain" id="PRO_0000122579" description="Aminomethyltransferase">
    <location>
        <begin position="1"/>
        <end position="371"/>
    </location>
</feature>
<accession>Q8CXD9</accession>
<reference key="1">
    <citation type="journal article" date="2002" name="Nucleic Acids Res.">
        <title>Genome sequence of Oceanobacillus iheyensis isolated from the Iheya Ridge and its unexpected adaptive capabilities to extreme environments.</title>
        <authorList>
            <person name="Takami H."/>
            <person name="Takaki Y."/>
            <person name="Uchiyama I."/>
        </authorList>
    </citation>
    <scope>NUCLEOTIDE SEQUENCE [LARGE SCALE GENOMIC DNA]</scope>
    <source>
        <strain>DSM 14371 / CIP 107618 / JCM 11309 / KCTC 3954 / HTE831</strain>
    </source>
</reference>